<proteinExistence type="inferred from homology"/>
<organism>
    <name type="scientific">Neosartorya fischeri (strain ATCC 1020 / DSM 3700 / CBS 544.65 / FGSC A1164 / JCM 1740 / NRRL 181 / WB 181)</name>
    <name type="common">Aspergillus fischerianus</name>
    <dbReference type="NCBI Taxonomy" id="331117"/>
    <lineage>
        <taxon>Eukaryota</taxon>
        <taxon>Fungi</taxon>
        <taxon>Dikarya</taxon>
        <taxon>Ascomycota</taxon>
        <taxon>Pezizomycotina</taxon>
        <taxon>Eurotiomycetes</taxon>
        <taxon>Eurotiomycetidae</taxon>
        <taxon>Eurotiales</taxon>
        <taxon>Aspergillaceae</taxon>
        <taxon>Aspergillus</taxon>
        <taxon>Aspergillus subgen. Fumigati</taxon>
    </lineage>
</organism>
<keyword id="KW-0175">Coiled coil</keyword>
<keyword id="KW-0378">Hydrolase</keyword>
<keyword id="KW-0645">Protease</keyword>
<keyword id="KW-1185">Reference proteome</keyword>
<keyword id="KW-0788">Thiol protease</keyword>
<keyword id="KW-0833">Ubl conjugation pathway</keyword>
<sequence length="761" mass="85840">MGSFLRSFRHNGGSTAPSVGAVPAKKEPQPPPMTPLEKRLLDMGPIREDGSDKFYGMENYGNTCYCNSILQCLYYSVPFREAVINYPTRTPIESLEAALAKSLRYPNPNAQLEAEAQAEKQKAANAQRPGMPPNPQQKPEDKDSPEYKKKMALQTLPLLETQNNAASYGMSESLFTSLKDIFESVVGSQSRIGIIRPQQFLEVLRRDHEMFRTAMHQDAHEFLNLLLNEVVANVEAEASKQPLMEKSLPAPETADSVDQSSSTGSKTPNTTRWVHELFEGLLTSETQCLTCEKVSQRDEVFLDLSVDLEQHSSVTSCLRKFSAEEMLCERNKFHCDNCGGLQEAEKRMKIKRLPRILALHLKRFKYTEDLQRLQKLFHRVVYPYHLRLFNTTDDAEDPDRLYELYAVVVHIGGGPYHGHYVAIIKTEDRGWLLFDDEMVEPVDKNYVKNFFGDKPGLACAYVLFYQETTLEAVLKEQEQENMDSNLAATDANDTILKQNGFPQSPLAHVHSASQIPSHEDNLRPNGLRRAPTAPQLSTHHEHGDPESTPFSPLSPLSPVPPVPPIPERVATVATPPKNDALAKREEKERKAAEKEKEKAEKLRRKEQGARMKENQRREEAELKAALEMSKASKAEEDRRLSTENGKEKQGGGLSRLKRGSKSLSHRLGKDKETRSVSSDLPPVPIPEHSTLSQSGPTSEQQQQQRQQSPPNHDQPPNSPQPGKPTIREDEQVNHKDSKHERTGHGKWRSFSLRKKSFSILS</sequence>
<accession>A1CW53</accession>
<comment type="function">
    <text evidence="1">Ubiquitin thioesterase component of the regulatory network controlling carbon source utilization through ubiquitination and deubiquitination involving creA, creB, creC, creD and acrB. Deubiquitinates the creA catabolic repressor and the quinate permease qutD. Also plays a role in response to carbon starvation and the control of extracellular proteases activity (By similarity).</text>
</comment>
<comment type="catalytic activity">
    <reaction>
        <text>Thiol-dependent hydrolysis of ester, thioester, amide, peptide and isopeptide bonds formed by the C-terminal Gly of ubiquitin (a 76-residue protein attached to proteins as an intracellular targeting signal).</text>
        <dbReference type="EC" id="3.4.19.12"/>
    </reaction>
</comment>
<comment type="subunit">
    <text evidence="1">Interacts with creA, creC and qutD.</text>
</comment>
<comment type="similarity">
    <text evidence="6">Belongs to the peptidase C19 family.</text>
</comment>
<comment type="sequence caution" evidence="6">
    <conflict type="erroneous gene model prediction">
        <sequence resource="EMBL-CDS" id="EAW24855"/>
    </conflict>
</comment>
<name>CREB_NEOFI</name>
<feature type="chain" id="PRO_0000395685" description="Probable ubiquitin carboxyl-terminal hydrolase creB">
    <location>
        <begin position="1"/>
        <end position="761"/>
    </location>
</feature>
<feature type="domain" description="USP">
    <location>
        <begin position="55"/>
        <end position="468"/>
    </location>
</feature>
<feature type="region of interest" description="Disordered" evidence="5">
    <location>
        <begin position="1"/>
        <end position="45"/>
    </location>
</feature>
<feature type="region of interest" description="Disordered" evidence="5">
    <location>
        <begin position="113"/>
        <end position="146"/>
    </location>
</feature>
<feature type="region of interest" description="Disordered" evidence="5">
    <location>
        <begin position="242"/>
        <end position="269"/>
    </location>
</feature>
<feature type="region of interest" description="Disordered" evidence="5">
    <location>
        <begin position="496"/>
        <end position="761"/>
    </location>
</feature>
<feature type="coiled-coil region" evidence="2">
    <location>
        <begin position="577"/>
        <end position="640"/>
    </location>
</feature>
<feature type="compositionally biased region" description="Basic and acidic residues" evidence="5">
    <location>
        <begin position="36"/>
        <end position="45"/>
    </location>
</feature>
<feature type="compositionally biased region" description="Polar residues" evidence="5">
    <location>
        <begin position="256"/>
        <end position="269"/>
    </location>
</feature>
<feature type="compositionally biased region" description="Pro residues" evidence="5">
    <location>
        <begin position="555"/>
        <end position="566"/>
    </location>
</feature>
<feature type="compositionally biased region" description="Basic and acidic residues" evidence="5">
    <location>
        <begin position="580"/>
        <end position="649"/>
    </location>
</feature>
<feature type="compositionally biased region" description="Basic residues" evidence="5">
    <location>
        <begin position="655"/>
        <end position="666"/>
    </location>
</feature>
<feature type="compositionally biased region" description="Low complexity" evidence="5">
    <location>
        <begin position="692"/>
        <end position="710"/>
    </location>
</feature>
<feature type="compositionally biased region" description="Pro residues" evidence="5">
    <location>
        <begin position="712"/>
        <end position="722"/>
    </location>
</feature>
<feature type="compositionally biased region" description="Basic and acidic residues" evidence="5">
    <location>
        <begin position="725"/>
        <end position="743"/>
    </location>
</feature>
<feature type="compositionally biased region" description="Basic residues" evidence="5">
    <location>
        <begin position="744"/>
        <end position="761"/>
    </location>
</feature>
<feature type="active site" description="Nucleophile" evidence="3 4">
    <location>
        <position position="64"/>
    </location>
</feature>
<feature type="active site" description="Proton acceptor" evidence="3 4">
    <location>
        <position position="419"/>
    </location>
</feature>
<protein>
    <recommendedName>
        <fullName>Probable ubiquitin carboxyl-terminal hydrolase creB</fullName>
        <ecNumber>3.4.19.12</ecNumber>
    </recommendedName>
    <alternativeName>
        <fullName>Carbon catabolite repression protein B</fullName>
    </alternativeName>
    <alternativeName>
        <fullName>Deubiquitinating enzyme creB</fullName>
    </alternativeName>
    <alternativeName>
        <fullName>Ubiquitin thioesterase creB</fullName>
    </alternativeName>
    <alternativeName>
        <fullName>Ubiquitin-hydrolyzing enzyme creB</fullName>
    </alternativeName>
    <alternativeName>
        <fullName>Ubiquitin-specific-processing protease creB</fullName>
    </alternativeName>
</protein>
<gene>
    <name type="primary">creB</name>
    <name type="ORF">NFIA_103430</name>
</gene>
<reference key="1">
    <citation type="journal article" date="2008" name="PLoS Genet.">
        <title>Genomic islands in the pathogenic filamentous fungus Aspergillus fumigatus.</title>
        <authorList>
            <person name="Fedorova N.D."/>
            <person name="Khaldi N."/>
            <person name="Joardar V.S."/>
            <person name="Maiti R."/>
            <person name="Amedeo P."/>
            <person name="Anderson M.J."/>
            <person name="Crabtree J."/>
            <person name="Silva J.C."/>
            <person name="Badger J.H."/>
            <person name="Albarraq A."/>
            <person name="Angiuoli S."/>
            <person name="Bussey H."/>
            <person name="Bowyer P."/>
            <person name="Cotty P.J."/>
            <person name="Dyer P.S."/>
            <person name="Egan A."/>
            <person name="Galens K."/>
            <person name="Fraser-Liggett C.M."/>
            <person name="Haas B.J."/>
            <person name="Inman J.M."/>
            <person name="Kent R."/>
            <person name="Lemieux S."/>
            <person name="Malavazi I."/>
            <person name="Orvis J."/>
            <person name="Roemer T."/>
            <person name="Ronning C.M."/>
            <person name="Sundaram J.P."/>
            <person name="Sutton G."/>
            <person name="Turner G."/>
            <person name="Venter J.C."/>
            <person name="White O.R."/>
            <person name="Whitty B.R."/>
            <person name="Youngman P."/>
            <person name="Wolfe K.H."/>
            <person name="Goldman G.H."/>
            <person name="Wortman J.R."/>
            <person name="Jiang B."/>
            <person name="Denning D.W."/>
            <person name="Nierman W.C."/>
        </authorList>
    </citation>
    <scope>NUCLEOTIDE SEQUENCE [LARGE SCALE GENOMIC DNA]</scope>
    <source>
        <strain>ATCC 1020 / DSM 3700 / CBS 544.65 / FGSC A1164 / JCM 1740 / NRRL 181 / WB 181</strain>
    </source>
</reference>
<evidence type="ECO:0000250" key="1"/>
<evidence type="ECO:0000255" key="2"/>
<evidence type="ECO:0000255" key="3">
    <source>
        <dbReference type="PROSITE-ProRule" id="PRU10092"/>
    </source>
</evidence>
<evidence type="ECO:0000255" key="4">
    <source>
        <dbReference type="PROSITE-ProRule" id="PRU10093"/>
    </source>
</evidence>
<evidence type="ECO:0000256" key="5">
    <source>
        <dbReference type="SAM" id="MobiDB-lite"/>
    </source>
</evidence>
<evidence type="ECO:0000305" key="6"/>
<dbReference type="EC" id="3.4.19.12"/>
<dbReference type="EMBL" id="DS027685">
    <property type="protein sequence ID" value="EAW24855.1"/>
    <property type="status" value="ALT_SEQ"/>
    <property type="molecule type" value="Genomic_DNA"/>
</dbReference>
<dbReference type="RefSeq" id="XP_001266752.1">
    <property type="nucleotide sequence ID" value="XM_001266751.1"/>
</dbReference>
<dbReference type="SMR" id="A1CW53"/>
<dbReference type="STRING" id="331117.A1CW53"/>
<dbReference type="EnsemblFungi" id="EAW24855">
    <property type="protein sequence ID" value="EAW24855"/>
    <property type="gene ID" value="NFIA_103430"/>
</dbReference>
<dbReference type="GeneID" id="4593253"/>
<dbReference type="KEGG" id="nfi:NFIA_103430"/>
<dbReference type="VEuPathDB" id="FungiDB:NFIA_103430"/>
<dbReference type="eggNOG" id="KOG1864">
    <property type="taxonomic scope" value="Eukaryota"/>
</dbReference>
<dbReference type="OrthoDB" id="27652at2759"/>
<dbReference type="Proteomes" id="UP000006702">
    <property type="component" value="Unassembled WGS sequence"/>
</dbReference>
<dbReference type="GO" id="GO:0005829">
    <property type="term" value="C:cytosol"/>
    <property type="evidence" value="ECO:0007669"/>
    <property type="project" value="TreeGrafter"/>
</dbReference>
<dbReference type="GO" id="GO:0005634">
    <property type="term" value="C:nucleus"/>
    <property type="evidence" value="ECO:0007669"/>
    <property type="project" value="TreeGrafter"/>
</dbReference>
<dbReference type="GO" id="GO:0004843">
    <property type="term" value="F:cysteine-type deubiquitinase activity"/>
    <property type="evidence" value="ECO:0000250"/>
    <property type="project" value="UniProtKB"/>
</dbReference>
<dbReference type="GO" id="GO:0045013">
    <property type="term" value="P:carbon catabolite repression of transcription"/>
    <property type="evidence" value="ECO:0000250"/>
    <property type="project" value="UniProtKB"/>
</dbReference>
<dbReference type="GO" id="GO:0016579">
    <property type="term" value="P:protein deubiquitination"/>
    <property type="evidence" value="ECO:0007669"/>
    <property type="project" value="InterPro"/>
</dbReference>
<dbReference type="GO" id="GO:0006511">
    <property type="term" value="P:ubiquitin-dependent protein catabolic process"/>
    <property type="evidence" value="ECO:0000250"/>
    <property type="project" value="UniProtKB"/>
</dbReference>
<dbReference type="CDD" id="cd02663">
    <property type="entry name" value="Peptidase_C19G"/>
    <property type="match status" value="1"/>
</dbReference>
<dbReference type="FunFam" id="3.90.70.10:FF:000075">
    <property type="entry name" value="Ubiquitin carboxyl-terminal hydrolase creB"/>
    <property type="match status" value="1"/>
</dbReference>
<dbReference type="Gene3D" id="3.90.70.10">
    <property type="entry name" value="Cysteine proteinases"/>
    <property type="match status" value="1"/>
</dbReference>
<dbReference type="InterPro" id="IPR038765">
    <property type="entry name" value="Papain-like_cys_pep_sf"/>
</dbReference>
<dbReference type="InterPro" id="IPR050164">
    <property type="entry name" value="Peptidase_C19"/>
</dbReference>
<dbReference type="InterPro" id="IPR001394">
    <property type="entry name" value="Peptidase_C19_UCH"/>
</dbReference>
<dbReference type="InterPro" id="IPR018200">
    <property type="entry name" value="USP_CS"/>
</dbReference>
<dbReference type="InterPro" id="IPR028889">
    <property type="entry name" value="USP_dom"/>
</dbReference>
<dbReference type="PANTHER" id="PTHR24006:SF733">
    <property type="entry name" value="RE52890P"/>
    <property type="match status" value="1"/>
</dbReference>
<dbReference type="PANTHER" id="PTHR24006">
    <property type="entry name" value="UBIQUITIN CARBOXYL-TERMINAL HYDROLASE"/>
    <property type="match status" value="1"/>
</dbReference>
<dbReference type="Pfam" id="PF00443">
    <property type="entry name" value="UCH"/>
    <property type="match status" value="1"/>
</dbReference>
<dbReference type="SUPFAM" id="SSF54001">
    <property type="entry name" value="Cysteine proteinases"/>
    <property type="match status" value="1"/>
</dbReference>
<dbReference type="PROSITE" id="PS00972">
    <property type="entry name" value="USP_1"/>
    <property type="match status" value="1"/>
</dbReference>
<dbReference type="PROSITE" id="PS00973">
    <property type="entry name" value="USP_2"/>
    <property type="match status" value="1"/>
</dbReference>
<dbReference type="PROSITE" id="PS50235">
    <property type="entry name" value="USP_3"/>
    <property type="match status" value="1"/>
</dbReference>